<gene>
    <name evidence="4" type="primary">erg8</name>
    <name type="ORF">AFUA_5G10680</name>
</gene>
<reference key="1">
    <citation type="journal article" date="2005" name="Nature">
        <title>Genomic sequence of the pathogenic and allergenic filamentous fungus Aspergillus fumigatus.</title>
        <authorList>
            <person name="Nierman W.C."/>
            <person name="Pain A."/>
            <person name="Anderson M.J."/>
            <person name="Wortman J.R."/>
            <person name="Kim H.S."/>
            <person name="Arroyo J."/>
            <person name="Berriman M."/>
            <person name="Abe K."/>
            <person name="Archer D.B."/>
            <person name="Bermejo C."/>
            <person name="Bennett J.W."/>
            <person name="Bowyer P."/>
            <person name="Chen D."/>
            <person name="Collins M."/>
            <person name="Coulsen R."/>
            <person name="Davies R."/>
            <person name="Dyer P.S."/>
            <person name="Farman M.L."/>
            <person name="Fedorova N."/>
            <person name="Fedorova N.D."/>
            <person name="Feldblyum T.V."/>
            <person name="Fischer R."/>
            <person name="Fosker N."/>
            <person name="Fraser A."/>
            <person name="Garcia J.L."/>
            <person name="Garcia M.J."/>
            <person name="Goble A."/>
            <person name="Goldman G.H."/>
            <person name="Gomi K."/>
            <person name="Griffith-Jones S."/>
            <person name="Gwilliam R."/>
            <person name="Haas B.J."/>
            <person name="Haas H."/>
            <person name="Harris D.E."/>
            <person name="Horiuchi H."/>
            <person name="Huang J."/>
            <person name="Humphray S."/>
            <person name="Jimenez J."/>
            <person name="Keller N."/>
            <person name="Khouri H."/>
            <person name="Kitamoto K."/>
            <person name="Kobayashi T."/>
            <person name="Konzack S."/>
            <person name="Kulkarni R."/>
            <person name="Kumagai T."/>
            <person name="Lafton A."/>
            <person name="Latge J.-P."/>
            <person name="Li W."/>
            <person name="Lord A."/>
            <person name="Lu C."/>
            <person name="Majoros W.H."/>
            <person name="May G.S."/>
            <person name="Miller B.L."/>
            <person name="Mohamoud Y."/>
            <person name="Molina M."/>
            <person name="Monod M."/>
            <person name="Mouyna I."/>
            <person name="Mulligan S."/>
            <person name="Murphy L.D."/>
            <person name="O'Neil S."/>
            <person name="Paulsen I."/>
            <person name="Penalva M.A."/>
            <person name="Pertea M."/>
            <person name="Price C."/>
            <person name="Pritchard B.L."/>
            <person name="Quail M.A."/>
            <person name="Rabbinowitsch E."/>
            <person name="Rawlins N."/>
            <person name="Rajandream M.A."/>
            <person name="Reichard U."/>
            <person name="Renauld H."/>
            <person name="Robson G.D."/>
            <person name="Rodriguez de Cordoba S."/>
            <person name="Rodriguez-Pena J.M."/>
            <person name="Ronning C.M."/>
            <person name="Rutter S."/>
            <person name="Salzberg S.L."/>
            <person name="Sanchez M."/>
            <person name="Sanchez-Ferrero J.C."/>
            <person name="Saunders D."/>
            <person name="Seeger K."/>
            <person name="Squares R."/>
            <person name="Squares S."/>
            <person name="Takeuchi M."/>
            <person name="Tekaia F."/>
            <person name="Turner G."/>
            <person name="Vazquez de Aldana C.R."/>
            <person name="Weidman J."/>
            <person name="White O."/>
            <person name="Woodward J.R."/>
            <person name="Yu J.-H."/>
            <person name="Fraser C.M."/>
            <person name="Galagan J.E."/>
            <person name="Asai K."/>
            <person name="Machida M."/>
            <person name="Hall N."/>
            <person name="Barrell B.G."/>
            <person name="Denning D.W."/>
        </authorList>
    </citation>
    <scope>NUCLEOTIDE SEQUENCE [LARGE SCALE GENOMIC DNA]</scope>
    <source>
        <strain>ATCC MYA-4609 / CBS 101355 / FGSC A1100 / Af293</strain>
    </source>
</reference>
<reference key="2">
    <citation type="journal article" date="2005" name="Med. Mycol.">
        <title>The ergosterol biosynthesis pathway, transporter genes, and azole resistance in Aspergillus fumigatus.</title>
        <authorList>
            <person name="Ferreira M.E."/>
            <person name="Colombo A.L."/>
            <person name="Paulsen I."/>
            <person name="Ren Q."/>
            <person name="Wortman J."/>
            <person name="Huang J."/>
            <person name="Goldman M.H."/>
            <person name="Goldman G.H."/>
        </authorList>
    </citation>
    <scope>IDENTIFICATION</scope>
    <scope>FUNCTION</scope>
</reference>
<reference key="3">
    <citation type="journal article" date="2012" name="Proc. Natl. Acad. Sci. U.S.A.">
        <title>Mevalonate governs interdependency of ergosterol and siderophore biosyntheses in the fungal pathogen Aspergillus fumigatus.</title>
        <authorList>
            <person name="Yasmin S."/>
            <person name="Alcazar-Fuoli L."/>
            <person name="Gruendlinger M."/>
            <person name="Puempel T."/>
            <person name="Cairns T."/>
            <person name="Blatzer M."/>
            <person name="Lopez J.F."/>
            <person name="Grimalt J.O."/>
            <person name="Bignell E."/>
            <person name="Haas H."/>
        </authorList>
    </citation>
    <scope>FUNCTION</scope>
</reference>
<evidence type="ECO:0000250" key="1">
    <source>
        <dbReference type="UniProtKB" id="P24521"/>
    </source>
</evidence>
<evidence type="ECO:0000255" key="2"/>
<evidence type="ECO:0000256" key="3">
    <source>
        <dbReference type="SAM" id="MobiDB-lite"/>
    </source>
</evidence>
<evidence type="ECO:0000303" key="4">
    <source>
    </source>
</evidence>
<evidence type="ECO:0000305" key="5"/>
<evidence type="ECO:0000305" key="6">
    <source>
    </source>
</evidence>
<evidence type="ECO:0000305" key="7">
    <source>
    </source>
</evidence>
<accession>Q4WV38</accession>
<sequence>MLPLPPAVTALSAPGKVLLTGGYLVLDRSYTGTVFALDARIHVIVQQLRRNHRREAASGSAHGRSDTPQAEGNVHGDKEDEGTIVVHSPQFVDAVWEYSIQRCEDGGGVLVKQRNDGPRNLFVETSLNFALTYISYVADSKDFGSLSITILADNDYYSETAFSKASGLRSSSRFVDFGVRLQEAHKTGLGSSAALVTALVSSLVIHRTMQPDDLGPGRDKLHNLAQAAHCAAQGKVGSGFDVAAAIYGSCLYRRFSPSILESVGDAGSPGFEERLFRIVEDADPQHPWDTECLDFGMKLPRGMQMVLCDVECGSQTPSMVRKVLEWRKQNQKEADMLWGALQSNNERLRLELRRLAQSPDEHTLSDFENVRTYIQRSRNHIRSMTQKSDVPIEPRVQTELLDALSELEGVIGGVVPGAGGYDAIVLLIQDNPDVITRLKAFFETWESKAEDDFGGKIGKVRLLGVRHGSEGVKNEMLEQYAGWV</sequence>
<protein>
    <recommendedName>
        <fullName evidence="4">Phosphomevalonate kinase erg8</fullName>
        <ecNumber evidence="7">2.7.4.2</ecNumber>
    </recommendedName>
    <alternativeName>
        <fullName evidence="4">Ergosterol biosynthesis protein 8</fullName>
    </alternativeName>
</protein>
<feature type="chain" id="PRO_0000454153" description="Phosphomevalonate kinase erg8">
    <location>
        <begin position="1"/>
        <end position="484"/>
    </location>
</feature>
<feature type="region of interest" description="Disordered" evidence="3">
    <location>
        <begin position="54"/>
        <end position="77"/>
    </location>
</feature>
<feature type="binding site" evidence="2">
    <location>
        <begin position="184"/>
        <end position="194"/>
    </location>
    <ligand>
        <name>ATP</name>
        <dbReference type="ChEBI" id="CHEBI:30616"/>
    </ligand>
</feature>
<organism>
    <name type="scientific">Aspergillus fumigatus (strain ATCC MYA-4609 / CBS 101355 / FGSC A1100 / Af293)</name>
    <name type="common">Neosartorya fumigata</name>
    <dbReference type="NCBI Taxonomy" id="330879"/>
    <lineage>
        <taxon>Eukaryota</taxon>
        <taxon>Fungi</taxon>
        <taxon>Dikarya</taxon>
        <taxon>Ascomycota</taxon>
        <taxon>Pezizomycotina</taxon>
        <taxon>Eurotiomycetes</taxon>
        <taxon>Eurotiomycetidae</taxon>
        <taxon>Eurotiales</taxon>
        <taxon>Aspergillaceae</taxon>
        <taxon>Aspergillus</taxon>
        <taxon>Aspergillus subgen. Fumigati</taxon>
    </lineage>
</organism>
<name>ERG8_ASPFU</name>
<comment type="function">
    <text evidence="1 6 7">Phosphomevalonate kinase; part of the second module of ergosterol biosynthesis pathway that includes the middle steps of the pathway (By similarity). Erg8 converts 5-phosphomevalonate to 5-diphosphomevalonate (By similarity). The second module is carried out in the vacuole and involves the formation of farnesyl diphosphate, which is also an important intermediate in the biosynthesis of ubiquinone, dolichol, heme and prenylated proteins. Activity by the mevalonate kinase erg12 (AFUA_4G07780) first converts mevalonate into 5-phosphomevalonate. 5-phosphomevalonate is then further converted to 5-diphosphomevalonate by the phosphomevalonate kinase erg8 (AFUA_5G10680). The diphosphomevalonate decarboxylase mvd1 (AFUA_4G07130) then produces isopentenyl diphosphate. The isopentenyl-diphosphate delta-isomerase idi1 (AFUA_6G11160) then catalyzes the 1,3-allylic rearrangement of the homoallylic substrate isopentenyl (IPP) to its highly electrophilic allylic isomer, dimethylallyl diphosphate (DMAPP). Finally the farnesyl diphosphate synthase erg20 (AFUA_5G02450) catalyzes the sequential condensation of isopentenyl pyrophosphate with dimethylallyl pyrophosphate, and then with the resultant geranylpyrophosphate to the ultimate product farnesyl pyrophosphate (Probable) (PubMed:16110826, PubMed:22106303).</text>
</comment>
<comment type="catalytic activity">
    <reaction evidence="6">
        <text>(R)-5-phosphomevalonate + ATP = (R)-5-diphosphomevalonate + ADP</text>
        <dbReference type="Rhea" id="RHEA:16341"/>
        <dbReference type="ChEBI" id="CHEBI:30616"/>
        <dbReference type="ChEBI" id="CHEBI:57557"/>
        <dbReference type="ChEBI" id="CHEBI:58146"/>
        <dbReference type="ChEBI" id="CHEBI:456216"/>
        <dbReference type="EC" id="2.7.4.2"/>
    </reaction>
    <physiologicalReaction direction="left-to-right" evidence="6">
        <dbReference type="Rhea" id="RHEA:16342"/>
    </physiologicalReaction>
</comment>
<comment type="pathway">
    <text evidence="6">Isoprenoid biosynthesis; isopentenyl diphosphate biosynthesis via mevalonate pathway; isopentenyl diphosphate from (R)-mevalonate: step 2/3.</text>
</comment>
<comment type="similarity">
    <text evidence="5">Belongs to the GHMP kinase family. Mevalonate kinase subfamily.</text>
</comment>
<dbReference type="EC" id="2.7.4.2" evidence="7"/>
<dbReference type="EMBL" id="AAHF01000003">
    <property type="protein sequence ID" value="EAL91538.1"/>
    <property type="molecule type" value="Genomic_DNA"/>
</dbReference>
<dbReference type="RefSeq" id="XP_753576.1">
    <property type="nucleotide sequence ID" value="XM_748483.1"/>
</dbReference>
<dbReference type="SMR" id="Q4WV38"/>
<dbReference type="FunCoup" id="Q4WV38">
    <property type="interactions" value="117"/>
</dbReference>
<dbReference type="STRING" id="330879.Q4WV38"/>
<dbReference type="EnsemblFungi" id="EAL91538">
    <property type="protein sequence ID" value="EAL91538"/>
    <property type="gene ID" value="AFUA_5G10680"/>
</dbReference>
<dbReference type="GeneID" id="3510941"/>
<dbReference type="KEGG" id="afm:AFUA_5G10680"/>
<dbReference type="VEuPathDB" id="FungiDB:Afu5g10680"/>
<dbReference type="eggNOG" id="KOG4519">
    <property type="taxonomic scope" value="Eukaryota"/>
</dbReference>
<dbReference type="HOGENOM" id="CLU_022059_1_0_1"/>
<dbReference type="InParanoid" id="Q4WV38"/>
<dbReference type="OMA" id="LVIHRTM"/>
<dbReference type="OrthoDB" id="10262935at2759"/>
<dbReference type="UniPathway" id="UPA00057">
    <property type="reaction ID" value="UER00099"/>
</dbReference>
<dbReference type="Proteomes" id="UP000002530">
    <property type="component" value="Chromosome 5"/>
</dbReference>
<dbReference type="GO" id="GO:0005777">
    <property type="term" value="C:peroxisome"/>
    <property type="evidence" value="ECO:0000318"/>
    <property type="project" value="GO_Central"/>
</dbReference>
<dbReference type="GO" id="GO:0005524">
    <property type="term" value="F:ATP binding"/>
    <property type="evidence" value="ECO:0007669"/>
    <property type="project" value="UniProtKB-KW"/>
</dbReference>
<dbReference type="GO" id="GO:0004631">
    <property type="term" value="F:phosphomevalonate kinase activity"/>
    <property type="evidence" value="ECO:0000318"/>
    <property type="project" value="GO_Central"/>
</dbReference>
<dbReference type="GO" id="GO:0006696">
    <property type="term" value="P:ergosterol biosynthetic process"/>
    <property type="evidence" value="ECO:0000318"/>
    <property type="project" value="GO_Central"/>
</dbReference>
<dbReference type="GO" id="GO:0010142">
    <property type="term" value="P:farnesyl diphosphate biosynthetic process, mevalonate pathway"/>
    <property type="evidence" value="ECO:0000318"/>
    <property type="project" value="GO_Central"/>
</dbReference>
<dbReference type="GO" id="GO:0019287">
    <property type="term" value="P:isopentenyl diphosphate biosynthetic process, mevalonate pathway"/>
    <property type="evidence" value="ECO:0000318"/>
    <property type="project" value="GO_Central"/>
</dbReference>
<dbReference type="FunFam" id="3.30.230.10:FF:000116">
    <property type="entry name" value="Phosphomevalonate kinase"/>
    <property type="match status" value="1"/>
</dbReference>
<dbReference type="FunFam" id="3.30.70.890:FF:000018">
    <property type="entry name" value="Phosphomevalonate kinase"/>
    <property type="match status" value="1"/>
</dbReference>
<dbReference type="Gene3D" id="3.30.230.10">
    <property type="match status" value="1"/>
</dbReference>
<dbReference type="Gene3D" id="3.30.70.890">
    <property type="entry name" value="GHMP kinase, C-terminal domain"/>
    <property type="match status" value="1"/>
</dbReference>
<dbReference type="InterPro" id="IPR016005">
    <property type="entry name" value="Erg8"/>
</dbReference>
<dbReference type="InterPro" id="IPR013750">
    <property type="entry name" value="GHMP_kinase_C_dom"/>
</dbReference>
<dbReference type="InterPro" id="IPR036554">
    <property type="entry name" value="GHMP_kinase_C_sf"/>
</dbReference>
<dbReference type="InterPro" id="IPR006204">
    <property type="entry name" value="GHMP_kinase_N_dom"/>
</dbReference>
<dbReference type="InterPro" id="IPR035102">
    <property type="entry name" value="Phosphomevalonate_kinase"/>
</dbReference>
<dbReference type="InterPro" id="IPR020568">
    <property type="entry name" value="Ribosomal_Su5_D2-typ_SF"/>
</dbReference>
<dbReference type="InterPro" id="IPR014721">
    <property type="entry name" value="Ribsml_uS5_D2-typ_fold_subgr"/>
</dbReference>
<dbReference type="PANTHER" id="PTHR31814">
    <property type="match status" value="1"/>
</dbReference>
<dbReference type="PANTHER" id="PTHR31814:SF2">
    <property type="entry name" value="PHOSPHOMEVALONATE KINASE"/>
    <property type="match status" value="1"/>
</dbReference>
<dbReference type="Pfam" id="PF08544">
    <property type="entry name" value="GHMP_kinases_C"/>
    <property type="match status" value="1"/>
</dbReference>
<dbReference type="Pfam" id="PF00288">
    <property type="entry name" value="GHMP_kinases_N"/>
    <property type="match status" value="1"/>
</dbReference>
<dbReference type="PIRSF" id="PIRSF017288">
    <property type="entry name" value="PMK_GHMP_euk"/>
    <property type="match status" value="1"/>
</dbReference>
<dbReference type="SUPFAM" id="SSF55060">
    <property type="entry name" value="GHMP Kinase, C-terminal domain"/>
    <property type="match status" value="1"/>
</dbReference>
<dbReference type="SUPFAM" id="SSF54211">
    <property type="entry name" value="Ribosomal protein S5 domain 2-like"/>
    <property type="match status" value="1"/>
</dbReference>
<keyword id="KW-0067">ATP-binding</keyword>
<keyword id="KW-0418">Kinase</keyword>
<keyword id="KW-0444">Lipid biosynthesis</keyword>
<keyword id="KW-0443">Lipid metabolism</keyword>
<keyword id="KW-0547">Nucleotide-binding</keyword>
<keyword id="KW-1185">Reference proteome</keyword>
<keyword id="KW-0752">Steroid biosynthesis</keyword>
<keyword id="KW-0753">Steroid metabolism</keyword>
<keyword id="KW-0756">Sterol biosynthesis</keyword>
<keyword id="KW-1207">Sterol metabolism</keyword>
<keyword id="KW-0808">Transferase</keyword>
<proteinExistence type="inferred from homology"/>